<comment type="function">
    <text evidence="1">Catalytic release of biotin from biocytin, the product of biotin-dependent carboxylases degradation.</text>
</comment>
<comment type="catalytic activity">
    <reaction evidence="1">
        <text>biocytin + H2O = biotin + L-lysine</text>
        <dbReference type="Rhea" id="RHEA:77171"/>
        <dbReference type="ChEBI" id="CHEBI:15377"/>
        <dbReference type="ChEBI" id="CHEBI:32551"/>
        <dbReference type="ChEBI" id="CHEBI:57586"/>
        <dbReference type="ChEBI" id="CHEBI:195545"/>
        <dbReference type="EC" id="3.5.1.12"/>
    </reaction>
</comment>
<comment type="catalytic activity">
    <reaction evidence="1">
        <text>biotin amide + H2O = biotin + NH4(+)</text>
        <dbReference type="Rhea" id="RHEA:13081"/>
        <dbReference type="ChEBI" id="CHEBI:15377"/>
        <dbReference type="ChEBI" id="CHEBI:16615"/>
        <dbReference type="ChEBI" id="CHEBI:28938"/>
        <dbReference type="ChEBI" id="CHEBI:57586"/>
    </reaction>
</comment>
<comment type="subcellular location">
    <subcellularLocation>
        <location evidence="1">Secreted</location>
        <location evidence="1">Extracellular space</location>
    </subcellularLocation>
</comment>
<comment type="similarity">
    <text evidence="4">Belongs to the carbon-nitrogen hydrolase superfamily. BTD/VNN family.</text>
</comment>
<keyword id="KW-0325">Glycoprotein</keyword>
<keyword id="KW-0378">Hydrolase</keyword>
<keyword id="KW-1185">Reference proteome</keyword>
<keyword id="KW-0964">Secreted</keyword>
<keyword id="KW-0732">Signal</keyword>
<reference key="1">
    <citation type="submission" date="2002-07" db="EMBL/GenBank/DDBJ databases">
        <authorList>
            <person name="Kosan C."/>
            <person name="Kunz J."/>
        </authorList>
    </citation>
    <scope>NUCLEOTIDE SEQUENCE [GENOMIC DNA]</scope>
</reference>
<protein>
    <recommendedName>
        <fullName>Biotinidase</fullName>
        <shortName>Biotinase</shortName>
        <ecNumber evidence="1">3.5.1.12</ecNumber>
    </recommendedName>
</protein>
<proteinExistence type="inferred from homology"/>
<dbReference type="EC" id="3.5.1.12" evidence="1"/>
<dbReference type="EMBL" id="AF527754">
    <property type="protein sequence ID" value="AAO15005.1"/>
    <property type="molecule type" value="Genomic_DNA"/>
</dbReference>
<dbReference type="RefSeq" id="XP_011607778.2">
    <property type="nucleotide sequence ID" value="XM_011609476.2"/>
</dbReference>
<dbReference type="SMR" id="Q8AV84"/>
<dbReference type="STRING" id="31033.ENSTRUP00000037989"/>
<dbReference type="GlyCosmos" id="Q8AV84">
    <property type="glycosylation" value="5 sites, No reported glycans"/>
</dbReference>
<dbReference type="Ensembl" id="ENSTRUT00000038125.3">
    <property type="protein sequence ID" value="ENSTRUP00000037989.3"/>
    <property type="gene ID" value="ENSTRUG00000014869.3"/>
</dbReference>
<dbReference type="GeneID" id="101069377"/>
<dbReference type="KEGG" id="tru:101069377"/>
<dbReference type="CTD" id="686"/>
<dbReference type="eggNOG" id="KOG0806">
    <property type="taxonomic scope" value="Eukaryota"/>
</dbReference>
<dbReference type="GeneTree" id="ENSGT00390000013823"/>
<dbReference type="InParanoid" id="Q8AV84"/>
<dbReference type="OMA" id="SGKWNPC"/>
<dbReference type="OrthoDB" id="10250282at2759"/>
<dbReference type="Proteomes" id="UP000005226">
    <property type="component" value="Chromosome 12"/>
</dbReference>
<dbReference type="GO" id="GO:0005576">
    <property type="term" value="C:extracellular region"/>
    <property type="evidence" value="ECO:0007669"/>
    <property type="project" value="UniProtKB-SubCell"/>
</dbReference>
<dbReference type="GO" id="GO:0047708">
    <property type="term" value="F:biotinidase activity"/>
    <property type="evidence" value="ECO:0007669"/>
    <property type="project" value="UniProtKB-EC"/>
</dbReference>
<dbReference type="CDD" id="cd07567">
    <property type="entry name" value="biotinidase_like"/>
    <property type="match status" value="1"/>
</dbReference>
<dbReference type="FunFam" id="3.60.110.10:FF:000001">
    <property type="entry name" value="biotinidase isoform X1"/>
    <property type="match status" value="1"/>
</dbReference>
<dbReference type="Gene3D" id="3.60.110.10">
    <property type="entry name" value="Carbon-nitrogen hydrolase"/>
    <property type="match status" value="1"/>
</dbReference>
<dbReference type="InterPro" id="IPR012101">
    <property type="entry name" value="Biotinidase-like_euk"/>
</dbReference>
<dbReference type="InterPro" id="IPR040154">
    <property type="entry name" value="Biotinidase/VNN"/>
</dbReference>
<dbReference type="InterPro" id="IPR003010">
    <property type="entry name" value="C-N_Hydrolase"/>
</dbReference>
<dbReference type="InterPro" id="IPR036526">
    <property type="entry name" value="C-N_Hydrolase_sf"/>
</dbReference>
<dbReference type="InterPro" id="IPR043957">
    <property type="entry name" value="Vanin_C"/>
</dbReference>
<dbReference type="PANTHER" id="PTHR10609:SF14">
    <property type="entry name" value="BIOTINIDASE"/>
    <property type="match status" value="1"/>
</dbReference>
<dbReference type="PANTHER" id="PTHR10609">
    <property type="entry name" value="BIOTINIDASE-RELATED"/>
    <property type="match status" value="1"/>
</dbReference>
<dbReference type="Pfam" id="PF00795">
    <property type="entry name" value="CN_hydrolase"/>
    <property type="match status" value="1"/>
</dbReference>
<dbReference type="Pfam" id="PF19018">
    <property type="entry name" value="Vanin_C"/>
    <property type="match status" value="1"/>
</dbReference>
<dbReference type="PIRSF" id="PIRSF011861">
    <property type="entry name" value="Biotinidase"/>
    <property type="match status" value="1"/>
</dbReference>
<dbReference type="SUPFAM" id="SSF56317">
    <property type="entry name" value="Carbon-nitrogen hydrolase"/>
    <property type="match status" value="1"/>
</dbReference>
<dbReference type="PROSITE" id="PS50263">
    <property type="entry name" value="CN_HYDROLASE"/>
    <property type="match status" value="1"/>
</dbReference>
<gene>
    <name type="primary">btd</name>
</gene>
<sequence length="504" mass="55552">MFSFGTVFTFALLLIPLTEAVDSSYVAAVYEHNLILNPDPRVPLSRLEALQHLQKNLDIFEVQAARAAQQGAQIIVFPEDGLHGFNFSRTSISAYLETVPDPEQESWNPCLEPLRHNNTEVLQQLSCMARRNNLYLVANMADLQPCSVSAAPSSCPPDGRWQFNTNVVFRSDGLLVARYHKYNLYFEAAFDAPPEPEIVTFDTPFAGKFGLITCFDILFQEPTVILVEKGVRQIIFPAAWMNQLPLLDIIQFQRAFSLGANVTLLAANIRNDQLIMTGSGIYTPFSATYHHAQRGDPEEGRLLVARVPVLDPEWLGHNAASGEAAAVDESSGYCYSETCLDSPASTAPVFVSSMMYDPFTFALLNATDGEMRVCNGTFCCYLQYRWVTETGRTELYALGAFDGTHTVNGRYAVQVCALVRCAGSDASSCGQEVDEAESKLDFMLEGKFASRHVYPSVLSSGMVLEQPERVEAAADGRVSLKHSNVMGGLVTACLYGRMHHLDTA</sequence>
<name>BTD_TAKRU</name>
<feature type="signal peptide" evidence="2">
    <location>
        <begin position="1"/>
        <end position="20"/>
    </location>
</feature>
<feature type="chain" id="PRO_0000019709" description="Biotinidase">
    <location>
        <begin position="21"/>
        <end position="504"/>
    </location>
</feature>
<feature type="domain" description="CN hydrolase" evidence="3">
    <location>
        <begin position="30"/>
        <end position="309"/>
    </location>
</feature>
<feature type="active site" description="Proton acceptor" evidence="3">
    <location>
        <position position="79"/>
    </location>
</feature>
<feature type="active site" description="Proton donor" evidence="3">
    <location>
        <position position="181"/>
    </location>
</feature>
<feature type="active site" description="Nucleophile" evidence="3">
    <location>
        <position position="214"/>
    </location>
</feature>
<feature type="glycosylation site" description="N-linked (GlcNAc...) asparagine" evidence="2">
    <location>
        <position position="86"/>
    </location>
</feature>
<feature type="glycosylation site" description="N-linked (GlcNAc...) asparagine" evidence="2">
    <location>
        <position position="117"/>
    </location>
</feature>
<feature type="glycosylation site" description="N-linked (GlcNAc...) asparagine" evidence="2">
    <location>
        <position position="261"/>
    </location>
</feature>
<feature type="glycosylation site" description="N-linked (GlcNAc...) asparagine" evidence="2">
    <location>
        <position position="365"/>
    </location>
</feature>
<feature type="glycosylation site" description="N-linked (GlcNAc...) asparagine" evidence="2">
    <location>
        <position position="375"/>
    </location>
</feature>
<evidence type="ECO:0000250" key="1">
    <source>
        <dbReference type="UniProtKB" id="P43251"/>
    </source>
</evidence>
<evidence type="ECO:0000255" key="2"/>
<evidence type="ECO:0000255" key="3">
    <source>
        <dbReference type="PROSITE-ProRule" id="PRU00054"/>
    </source>
</evidence>
<evidence type="ECO:0000305" key="4"/>
<organism>
    <name type="scientific">Takifugu rubripes</name>
    <name type="common">Japanese pufferfish</name>
    <name type="synonym">Fugu rubripes</name>
    <dbReference type="NCBI Taxonomy" id="31033"/>
    <lineage>
        <taxon>Eukaryota</taxon>
        <taxon>Metazoa</taxon>
        <taxon>Chordata</taxon>
        <taxon>Craniata</taxon>
        <taxon>Vertebrata</taxon>
        <taxon>Euteleostomi</taxon>
        <taxon>Actinopterygii</taxon>
        <taxon>Neopterygii</taxon>
        <taxon>Teleostei</taxon>
        <taxon>Neoteleostei</taxon>
        <taxon>Acanthomorphata</taxon>
        <taxon>Eupercaria</taxon>
        <taxon>Tetraodontiformes</taxon>
        <taxon>Tetradontoidea</taxon>
        <taxon>Tetraodontidae</taxon>
        <taxon>Takifugu</taxon>
    </lineage>
</organism>
<accession>Q8AV84</accession>